<dbReference type="EMBL" id="AY911262">
    <property type="protein sequence ID" value="AAX23991.1"/>
    <property type="molecule type" value="Genomic_RNA"/>
</dbReference>
<dbReference type="EMBL" id="KF713490">
    <property type="protein sequence ID" value="AHC94759.1"/>
    <property type="molecule type" value="Viral_cRNA"/>
</dbReference>
<dbReference type="EMBL" id="KF713491">
    <property type="protein sequence ID" value="AHC94772.1"/>
    <property type="molecule type" value="Viral_cRNA"/>
</dbReference>
<dbReference type="EMBL" id="KF713492">
    <property type="protein sequence ID" value="AHC94784.1"/>
    <property type="molecule type" value="Viral_cRNA"/>
</dbReference>
<dbReference type="EMBL" id="KU707921">
    <property type="protein sequence ID" value="AMQ35399.1"/>
    <property type="molecule type" value="Genomic_RNA"/>
</dbReference>
<dbReference type="EMBL" id="KX348546">
    <property type="protein sequence ID" value="API65185.1"/>
    <property type="molecule type" value="Genomic_RNA"/>
</dbReference>
<dbReference type="EMBL" id="MK810782">
    <property type="protein sequence ID" value="QFX69108.1"/>
    <property type="molecule type" value="Genomic_RNA"/>
</dbReference>
<dbReference type="EMBL" id="MK816924">
    <property type="protein sequence ID" value="QFX69121.1"/>
    <property type="molecule type" value="Genomic_RNA"/>
</dbReference>
<dbReference type="EMBL" id="MW039343">
    <property type="protein sequence ID" value="QPB74361.1"/>
    <property type="molecule type" value="Viral_cRNA"/>
</dbReference>
<dbReference type="EMBL" id="MT994242">
    <property type="protein sequence ID" value="QXO84938.1"/>
    <property type="molecule type" value="Genomic_RNA"/>
</dbReference>
<dbReference type="EMBL" id="MT994243">
    <property type="protein sequence ID" value="QXO84949.1"/>
    <property type="molecule type" value="Genomic_RNA"/>
</dbReference>
<dbReference type="SMR" id="Q4KRW7"/>
<dbReference type="Proteomes" id="UP000103294">
    <property type="component" value="Genome"/>
</dbReference>
<dbReference type="Proteomes" id="UP000119304">
    <property type="component" value="Genome"/>
</dbReference>
<dbReference type="Proteomes" id="UP000130886">
    <property type="component" value="Genome"/>
</dbReference>
<dbReference type="Proteomes" id="UP000158141">
    <property type="component" value="Genome"/>
</dbReference>
<dbReference type="Proteomes" id="UP000163705">
    <property type="component" value="Genome"/>
</dbReference>
<dbReference type="GO" id="GO:0030430">
    <property type="term" value="C:host cell cytoplasm"/>
    <property type="evidence" value="ECO:0007669"/>
    <property type="project" value="UniProtKB-SubCell"/>
</dbReference>
<dbReference type="GO" id="GO:0042025">
    <property type="term" value="C:host cell nucleus"/>
    <property type="evidence" value="ECO:0007669"/>
    <property type="project" value="UniProtKB-SubCell"/>
</dbReference>
<dbReference type="GO" id="GO:0020002">
    <property type="term" value="C:host cell plasma membrane"/>
    <property type="evidence" value="ECO:0007669"/>
    <property type="project" value="UniProtKB-SubCell"/>
</dbReference>
<dbReference type="GO" id="GO:0016020">
    <property type="term" value="C:membrane"/>
    <property type="evidence" value="ECO:0007669"/>
    <property type="project" value="UniProtKB-KW"/>
</dbReference>
<dbReference type="GO" id="GO:0019031">
    <property type="term" value="C:viral envelope"/>
    <property type="evidence" value="ECO:0007669"/>
    <property type="project" value="InterPro"/>
</dbReference>
<dbReference type="GO" id="GO:0039660">
    <property type="term" value="F:structural constituent of virion"/>
    <property type="evidence" value="ECO:0007669"/>
    <property type="project" value="UniProtKB-KW"/>
</dbReference>
<dbReference type="GO" id="GO:0019068">
    <property type="term" value="P:virion assembly"/>
    <property type="evidence" value="ECO:0007669"/>
    <property type="project" value="InterPro"/>
</dbReference>
<dbReference type="Gene3D" id="2.70.20.30">
    <property type="entry name" value="HRSV-S2 matrix protein, N-terminal domain"/>
    <property type="match status" value="1"/>
</dbReference>
<dbReference type="InterPro" id="IPR055461">
    <property type="entry name" value="Matrix_Pneumo_C"/>
</dbReference>
<dbReference type="InterPro" id="IPR005056">
    <property type="entry name" value="MATRX_N_pneumovirus"/>
</dbReference>
<dbReference type="InterPro" id="IPR043062">
    <property type="entry name" value="Pneu_matrix_N"/>
</dbReference>
<dbReference type="Pfam" id="PF23766">
    <property type="entry name" value="Matrix_Pneumo_C"/>
    <property type="match status" value="1"/>
</dbReference>
<dbReference type="Pfam" id="PF03393">
    <property type="entry name" value="Matrix_Pneumo_N"/>
    <property type="match status" value="1"/>
</dbReference>
<evidence type="ECO:0000250" key="1">
    <source>
        <dbReference type="UniProtKB" id="P0DOE7"/>
    </source>
</evidence>
<evidence type="ECO:0000305" key="2"/>
<gene>
    <name type="primary">M</name>
</gene>
<sequence>METYVNKLHEGSTYTAAVQYNVLEKDDDPASLTIWVPMFQSSMPADLLIKELANVNILVKQISTPKGPSLRVMINSRSALLAQMPSKFTICANVSLDERSKLAYDVTTPCEIKACSLTCLKSKNMLTTVKDLTMKTLNPTHDIIALCEFENIVTSKKVIIPTYLRSISVRNKDLNTLENITTTEFKNAITNAKIIPYSGLLLVITVTDNKGAFKYIKPQSQFIVDLGAYLEKESIYYVTTNWKHTATRFAIKPMED</sequence>
<proteinExistence type="inferred from homology"/>
<reference key="1">
    <citation type="journal article" date="2005" name="J. Virol.">
        <title>Respiratory syncytial virus nonstructural proteins NS1 and NS2 mediate inhibition of Stat2 expression and alpha/beta interferon responsiveness.</title>
        <authorList>
            <person name="Lo M.S."/>
            <person name="Brazas R.M."/>
            <person name="Holtzman M.J."/>
        </authorList>
    </citation>
    <scope>NUCLEOTIDE SEQUENCE [LARGE SCALE GENOMIC DNA]</scope>
    <source>
        <strain>ATCC VR-26</strain>
    </source>
</reference>
<reference key="2">
    <citation type="journal article" date="2019" name="Sci. Rep.">
        <title>The Interactome analysis of the Respiratory Syncytial Virus protein M2-1 suggests a new role in viral mRNA metabolism post-transcription.</title>
        <authorList>
            <person name="Bouillier C."/>
            <person name="Cosentino G."/>
            <person name="Leger T."/>
            <person name="Rincheval V."/>
            <person name="Richard C.A."/>
            <person name="Desquesnes A."/>
            <person name="Sitterlin D."/>
            <person name="Blouquit-Laye S."/>
            <person name="Eleouet J.F."/>
            <person name="Gault E."/>
            <person name="Rameix-Welti M.A."/>
        </authorList>
    </citation>
    <scope>NUCLEOTIDE SEQUENCE [GENOMIC RNA]</scope>
</reference>
<reference key="3">
    <citation type="journal article" date="2021" name="Nature">
        <title>A condensate-hardening drug blocks RSV replication in vivo.</title>
        <authorList>
            <person name="Risso-Ballester J."/>
            <person name="Galloux M."/>
            <person name="Cao J."/>
            <person name="Le Goffic R."/>
            <person name="Hontonnou F."/>
            <person name="Jobart-Malfait A."/>
            <person name="Desquesnes A."/>
            <person name="Sake S.M."/>
            <person name="Haid S."/>
            <person name="Du M."/>
            <person name="Zhang X."/>
            <person name="Zhang H."/>
            <person name="Wang Z."/>
            <person name="Rincheval V."/>
            <person name="Zhang Y."/>
            <person name="Pietschmann T."/>
            <person name="Eleouet J.F."/>
            <person name="Rameix-Welti M.A."/>
            <person name="Altmeyer R."/>
        </authorList>
    </citation>
    <scope>NUCLEOTIDE SEQUENCE [GENOMIC RNA]</scope>
    <source>
        <strain>RSV Long ATCC VR-26</strain>
    </source>
</reference>
<keyword id="KW-1032">Host cell membrane</keyword>
<keyword id="KW-1035">Host cytoplasm</keyword>
<keyword id="KW-1043">Host membrane</keyword>
<keyword id="KW-1048">Host nucleus</keyword>
<keyword id="KW-0945">Host-virus interaction</keyword>
<keyword id="KW-0472">Membrane</keyword>
<keyword id="KW-0597">Phosphoprotein</keyword>
<keyword id="KW-0468">Viral matrix protein</keyword>
<keyword id="KW-0946">Virion</keyword>
<name>MATRX_HRSV</name>
<feature type="chain" id="PRO_0000458091" description="Matrix protein">
    <location>
        <begin position="1"/>
        <end position="256"/>
    </location>
</feature>
<feature type="region of interest" description="Interaction with M2-1" evidence="1">
    <location>
        <begin position="1"/>
        <end position="110"/>
    </location>
</feature>
<feature type="region of interest" description="Nuclear targeting and binding to host importin KPNB1" evidence="1">
    <location>
        <begin position="110"/>
        <end position="183"/>
    </location>
</feature>
<feature type="short sequence motif" description="Nuclear export signal" evidence="1">
    <location>
        <begin position="194"/>
        <end position="206"/>
    </location>
</feature>
<feature type="modified residue" description="Phosphothreonine" evidence="1">
    <location>
        <position position="205"/>
    </location>
</feature>
<organismHost>
    <name type="scientific">Homo sapiens</name>
    <name type="common">Human</name>
    <dbReference type="NCBI Taxonomy" id="9606"/>
</organismHost>
<protein>
    <recommendedName>
        <fullName>Matrix protein</fullName>
    </recommendedName>
    <alternativeName>
        <fullName>M protein</fullName>
    </alternativeName>
</protein>
<accession>Q4KRW7</accession>
<organism>
    <name type="scientific">Human respiratory syncytial virus</name>
    <dbReference type="NCBI Taxonomy" id="11250"/>
    <lineage>
        <taxon>Viruses</taxon>
        <taxon>Riboviria</taxon>
        <taxon>Orthornavirae</taxon>
        <taxon>Negarnaviricota</taxon>
        <taxon>Haploviricotina</taxon>
        <taxon>Monjiviricetes</taxon>
        <taxon>Mononegavirales</taxon>
        <taxon>Pneumoviridae</taxon>
        <taxon>Orthopneumovirus</taxon>
        <taxon>Orthopneumovirus hominis</taxon>
    </lineage>
</organism>
<comment type="function">
    <text evidence="1">Plays a crucial role in virus assembly into filaments and budding. Early in infection, localizes in the nucleus where it inhibits host cell transcription through direct binding to host chromatin. Later in infection, traffics to the cytoplasm through the action of host CRM1 to associate with inclusion bodies, the site of viral transcription and replication. During virus assembly and budding, acts as a bridge between the nucleocapsid and the lipid bilayer. Also plays a role in the inhibition of host interferon-beta response in a RACK1-dependent manner.</text>
</comment>
<comment type="subunit">
    <text evidence="1">Forms dimers. Forms higher-order oligomers. Interacts with glycoprotein G (via N-terminus). Interacts with protein M2-1; this interaction directs the matrix protein localization to cytoplasmic inclusions comprising viral proteins L, N, P, and M2-1 and mediates the matrix protein association with the nucleocapsid. Interacts with host importin KPNB1; this interaction mediates nuclear import of the matrix protein early during infection. Interacts with host AP3M1; this interaction plays an essential role in trafficking the matrix protein in host cells. Interacts with host CAV1; this interaction probably facilitates viral budding. Interacts with host CFL1; this interaction probably facilitates viral replication. Interacts with host ZNF502; this interaction probably facilitates viral release. Interacts with host RACK1.</text>
</comment>
<comment type="subcellular location">
    <subcellularLocation>
        <location evidence="1">Virion</location>
    </subcellularLocation>
    <subcellularLocation>
        <location evidence="1">Host cytoplasm</location>
    </subcellularLocation>
    <subcellularLocation>
        <location evidence="1">Host nucleus</location>
    </subcellularLocation>
    <subcellularLocation>
        <location evidence="1">Host cell membrane</location>
        <topology evidence="1">Peripheral membrane protein</topology>
        <orientation evidence="1">Cytoplasmic side</orientation>
    </subcellularLocation>
    <text evidence="1">In the cytoplasm, associates with inclusion bodies. During bud formation, associates at the inner side of the plasma membrane of infected cells.</text>
</comment>
<comment type="PTM">
    <text evidence="1">Phosphorylation is important for oligomerization.</text>
</comment>
<comment type="similarity">
    <text evidence="2">Belongs to the pneumovirinae M protein family.</text>
</comment>